<comment type="function">
    <text evidence="1">Probable S-adenosyl-L-methionine-dependent methyltransferase which specifically dimethylates mitochondrial 12S rRNA at the conserved stem loop. Also required for basal transcription of mitochondrial DNA. Stimulates transcription independently of the methyltransferase activity (By similarity).</text>
</comment>
<comment type="subcellular location">
    <subcellularLocation>
        <location evidence="1">Mitochondrion</location>
    </subcellularLocation>
</comment>
<comment type="similarity">
    <text evidence="3">Belongs to the class I-like SAM-binding methyltransferase superfamily. rRNA adenine N(6)-methyltransferase family. KsgA subfamily.</text>
</comment>
<feature type="transit peptide" description="Mitochondrion" evidence="2">
    <location>
        <begin position="1"/>
        <end position="16"/>
    </location>
</feature>
<feature type="chain" id="PRO_0000273182" description="Dimethyladenosine transferase 1, mitochondrial">
    <location>
        <begin position="17"/>
        <end position="367"/>
    </location>
</feature>
<feature type="binding site" evidence="1">
    <location>
        <begin position="30"/>
        <end position="33"/>
    </location>
    <ligand>
        <name>S-adenosyl-L-methionine</name>
        <dbReference type="ChEBI" id="CHEBI:59789"/>
    </ligand>
</feature>
<feature type="binding site" evidence="3">
    <location>
        <position position="31"/>
    </location>
    <ligand>
        <name>S-adenosyl-L-methionine</name>
        <dbReference type="ChEBI" id="CHEBI:59789"/>
    </ligand>
</feature>
<feature type="binding site" evidence="3">
    <location>
        <position position="33"/>
    </location>
    <ligand>
        <name>S-adenosyl-L-methionine</name>
        <dbReference type="ChEBI" id="CHEBI:59789"/>
    </ligand>
</feature>
<feature type="binding site" evidence="3">
    <location>
        <position position="58"/>
    </location>
    <ligand>
        <name>S-adenosyl-L-methionine</name>
        <dbReference type="ChEBI" id="CHEBI:59789"/>
    </ligand>
</feature>
<feature type="binding site" evidence="3">
    <location>
        <position position="80"/>
    </location>
    <ligand>
        <name>S-adenosyl-L-methionine</name>
        <dbReference type="ChEBI" id="CHEBI:59789"/>
    </ligand>
</feature>
<feature type="binding site" evidence="3">
    <location>
        <position position="106"/>
    </location>
    <ligand>
        <name>S-adenosyl-L-methionine</name>
        <dbReference type="ChEBI" id="CHEBI:59789"/>
    </ligand>
</feature>
<feature type="binding site" evidence="3">
    <location>
        <position position="141"/>
    </location>
    <ligand>
        <name>S-adenosyl-L-methionine</name>
        <dbReference type="ChEBI" id="CHEBI:59789"/>
    </ligand>
</feature>
<organism>
    <name type="scientific">Caenorhabditis elegans</name>
    <dbReference type="NCBI Taxonomy" id="6239"/>
    <lineage>
        <taxon>Eukaryota</taxon>
        <taxon>Metazoa</taxon>
        <taxon>Ecdysozoa</taxon>
        <taxon>Nematoda</taxon>
        <taxon>Chromadorea</taxon>
        <taxon>Rhabditida</taxon>
        <taxon>Rhabditina</taxon>
        <taxon>Rhabditomorpha</taxon>
        <taxon>Rhabditoidea</taxon>
        <taxon>Rhabditidae</taxon>
        <taxon>Peloderinae</taxon>
        <taxon>Caenorhabditis</taxon>
    </lineage>
</organism>
<protein>
    <recommendedName>
        <fullName>Dimethyladenosine transferase 1, mitochondrial</fullName>
        <ecNumber>2.1.1.-</ecNumber>
    </recommendedName>
    <alternativeName>
        <fullName>Mitochondrial 12S rRNA dimethylase 1</fullName>
    </alternativeName>
    <alternativeName>
        <fullName>Mitochondrial transcription factor B1</fullName>
    </alternativeName>
    <alternativeName>
        <fullName>S-adenosylmethionine-6-N', N'-adenosyl(rRNA) dimethyltransferase 1</fullName>
    </alternativeName>
</protein>
<accession>P91424</accession>
<keyword id="KW-0489">Methyltransferase</keyword>
<keyword id="KW-0496">Mitochondrion</keyword>
<keyword id="KW-1185">Reference proteome</keyword>
<keyword id="KW-0694">RNA-binding</keyword>
<keyword id="KW-0698">rRNA processing</keyword>
<keyword id="KW-0949">S-adenosyl-L-methionine</keyword>
<keyword id="KW-0804">Transcription</keyword>
<keyword id="KW-0805">Transcription regulation</keyword>
<keyword id="KW-0808">Transferase</keyword>
<keyword id="KW-0809">Transit peptide</keyword>
<name>TFB1M_CAEEL</name>
<sequence length="367" mass="41893">MASASRLPPLPALRDFIHMYRLRAKKILSQNYLMDMNITRKIAKHAKVIEKDWVIEIGPGPGGITRAILEAGASRLDVVEIDNRFIPPLQHLAEAADSRMFIHHQDALRTEIGDIWKNETARPESVDWHDSNLPAMHVIGNLPFNIASPLIIKYLRDMSYRRGVWQYGRVPLTLTFQLEVAKRLCSPIACDTRSRISIMSQYVAEPKMVFQISGSCFVPRPQVDVGVVRFVPRKTPLVNTSFEVLEKVCRQVFHYRQKYVTKGLKTLYPEELEDELSDDLLKKCRIDPTTTSIRLGIEQFADLAEGYNEQCIRYPGLFLYDYTNKLHNLEDLSKEPNALPPPVPIFAPAPTIDSADNTWSLKNFNCS</sequence>
<dbReference type="EC" id="2.1.1.-"/>
<dbReference type="EMBL" id="FO080917">
    <property type="protein sequence ID" value="CCD67792.1"/>
    <property type="molecule type" value="Genomic_DNA"/>
</dbReference>
<dbReference type="PIR" id="T29195">
    <property type="entry name" value="T29195"/>
</dbReference>
<dbReference type="RefSeq" id="NP_491242.2">
    <property type="nucleotide sequence ID" value="NM_058841.6"/>
</dbReference>
<dbReference type="SMR" id="P91424"/>
<dbReference type="BioGRID" id="52696">
    <property type="interactions" value="1"/>
</dbReference>
<dbReference type="FunCoup" id="P91424">
    <property type="interactions" value="629"/>
</dbReference>
<dbReference type="STRING" id="6239.T03F1.7.1"/>
<dbReference type="PaxDb" id="6239-T03F1.7"/>
<dbReference type="PeptideAtlas" id="P91424"/>
<dbReference type="EnsemblMetazoa" id="T03F1.7.1">
    <property type="protein sequence ID" value="T03F1.7.1"/>
    <property type="gene ID" value="WBGene00020189"/>
</dbReference>
<dbReference type="GeneID" id="188022"/>
<dbReference type="KEGG" id="cel:CELE_T03F1.7"/>
<dbReference type="UCSC" id="T03F1.7">
    <property type="organism name" value="c. elegans"/>
</dbReference>
<dbReference type="AGR" id="WB:WBGene00020189"/>
<dbReference type="CTD" id="188022"/>
<dbReference type="WormBase" id="T03F1.7">
    <property type="protein sequence ID" value="CE30685"/>
    <property type="gene ID" value="WBGene00020189"/>
    <property type="gene designation" value="tfbm-1"/>
</dbReference>
<dbReference type="eggNOG" id="KOG0821">
    <property type="taxonomic scope" value="Eukaryota"/>
</dbReference>
<dbReference type="GeneTree" id="ENSGT00950000183142"/>
<dbReference type="HOGENOM" id="CLU_041220_7_0_1"/>
<dbReference type="InParanoid" id="P91424"/>
<dbReference type="OMA" id="RIEQPFK"/>
<dbReference type="OrthoDB" id="16079at2759"/>
<dbReference type="PhylomeDB" id="P91424"/>
<dbReference type="PRO" id="PR:P91424"/>
<dbReference type="Proteomes" id="UP000001940">
    <property type="component" value="Chromosome I"/>
</dbReference>
<dbReference type="Bgee" id="WBGene00020189">
    <property type="expression patterns" value="Expressed in germ line (C elegans) and 4 other cell types or tissues"/>
</dbReference>
<dbReference type="GO" id="GO:0005759">
    <property type="term" value="C:mitochondrial matrix"/>
    <property type="evidence" value="ECO:0000318"/>
    <property type="project" value="GO_Central"/>
</dbReference>
<dbReference type="GO" id="GO:0034246">
    <property type="term" value="F:mitochondrial transcription factor activity"/>
    <property type="evidence" value="ECO:0000318"/>
    <property type="project" value="GO_Central"/>
</dbReference>
<dbReference type="GO" id="GO:0003723">
    <property type="term" value="F:RNA binding"/>
    <property type="evidence" value="ECO:0007669"/>
    <property type="project" value="UniProtKB-KW"/>
</dbReference>
<dbReference type="GO" id="GO:0000179">
    <property type="term" value="F:rRNA (adenine-N6,N6-)-dimethyltransferase activity"/>
    <property type="evidence" value="ECO:0000318"/>
    <property type="project" value="GO_Central"/>
</dbReference>
<dbReference type="GO" id="GO:0031167">
    <property type="term" value="P:rRNA methylation"/>
    <property type="evidence" value="ECO:0000318"/>
    <property type="project" value="GO_Central"/>
</dbReference>
<dbReference type="GO" id="GO:0006391">
    <property type="term" value="P:transcription initiation at mitochondrial promoter"/>
    <property type="evidence" value="ECO:0000318"/>
    <property type="project" value="GO_Central"/>
</dbReference>
<dbReference type="CDD" id="cd02440">
    <property type="entry name" value="AdoMet_MTases"/>
    <property type="match status" value="1"/>
</dbReference>
<dbReference type="FunFam" id="1.10.8.100:FF:000006">
    <property type="entry name" value="rRNA adenine N(6)-methyltransferase"/>
    <property type="match status" value="1"/>
</dbReference>
<dbReference type="FunFam" id="3.40.50.150:FF:000109">
    <property type="entry name" value="rRNA adenine N(6)-methyltransferase"/>
    <property type="match status" value="1"/>
</dbReference>
<dbReference type="Gene3D" id="1.10.8.100">
    <property type="entry name" value="Ribosomal RNA adenine dimethylase-like, domain 2"/>
    <property type="match status" value="1"/>
</dbReference>
<dbReference type="Gene3D" id="3.40.50.150">
    <property type="entry name" value="Vaccinia Virus protein VP39"/>
    <property type="match status" value="1"/>
</dbReference>
<dbReference type="InterPro" id="IPR001737">
    <property type="entry name" value="KsgA/Erm"/>
</dbReference>
<dbReference type="InterPro" id="IPR023165">
    <property type="entry name" value="rRNA_Ade_diMease-like_C"/>
</dbReference>
<dbReference type="InterPro" id="IPR020596">
    <property type="entry name" value="rRNA_Ade_Mease_Trfase_CS"/>
</dbReference>
<dbReference type="InterPro" id="IPR020598">
    <property type="entry name" value="rRNA_Ade_methylase_Trfase_N"/>
</dbReference>
<dbReference type="InterPro" id="IPR011530">
    <property type="entry name" value="rRNA_adenine_dimethylase"/>
</dbReference>
<dbReference type="InterPro" id="IPR029063">
    <property type="entry name" value="SAM-dependent_MTases_sf"/>
</dbReference>
<dbReference type="NCBIfam" id="TIGR00755">
    <property type="entry name" value="ksgA"/>
    <property type="match status" value="1"/>
</dbReference>
<dbReference type="PANTHER" id="PTHR11727">
    <property type="entry name" value="DIMETHYLADENOSINE TRANSFERASE"/>
    <property type="match status" value="1"/>
</dbReference>
<dbReference type="PANTHER" id="PTHR11727:SF17">
    <property type="entry name" value="DIMETHYLADENOSINE TRANSFERASE 1, MITOCHONDRIAL"/>
    <property type="match status" value="1"/>
</dbReference>
<dbReference type="Pfam" id="PF00398">
    <property type="entry name" value="RrnaAD"/>
    <property type="match status" value="1"/>
</dbReference>
<dbReference type="SMART" id="SM00650">
    <property type="entry name" value="rADc"/>
    <property type="match status" value="1"/>
</dbReference>
<dbReference type="SUPFAM" id="SSF53335">
    <property type="entry name" value="S-adenosyl-L-methionine-dependent methyltransferases"/>
    <property type="match status" value="1"/>
</dbReference>
<dbReference type="PROSITE" id="PS01131">
    <property type="entry name" value="RRNA_A_DIMETH"/>
    <property type="match status" value="1"/>
</dbReference>
<dbReference type="PROSITE" id="PS51689">
    <property type="entry name" value="SAM_RNA_A_N6_MT"/>
    <property type="match status" value="1"/>
</dbReference>
<proteinExistence type="inferred from homology"/>
<reference key="1">
    <citation type="journal article" date="1998" name="Science">
        <title>Genome sequence of the nematode C. elegans: a platform for investigating biology.</title>
        <authorList>
            <consortium name="The C. elegans sequencing consortium"/>
        </authorList>
    </citation>
    <scope>NUCLEOTIDE SEQUENCE [LARGE SCALE GENOMIC DNA]</scope>
    <source>
        <strain>Bristol N2</strain>
    </source>
</reference>
<gene>
    <name type="primary">tfbm-1</name>
    <name type="ORF">T03F1.7</name>
</gene>
<evidence type="ECO:0000250" key="1"/>
<evidence type="ECO:0000255" key="2"/>
<evidence type="ECO:0000255" key="3">
    <source>
        <dbReference type="PROSITE-ProRule" id="PRU01026"/>
    </source>
</evidence>